<protein>
    <recommendedName>
        <fullName evidence="1">UDP-N-acetyl-D-mannosamine dehydrogenase</fullName>
        <ecNumber evidence="1">1.1.1.336</ecNumber>
    </recommendedName>
    <alternativeName>
        <fullName evidence="1">UDP-ManNAc 6-dehydrogenase</fullName>
    </alternativeName>
</protein>
<keyword id="KW-0520">NAD</keyword>
<keyword id="KW-0560">Oxidoreductase</keyword>
<keyword id="KW-1185">Reference proteome</keyword>
<feature type="chain" id="PRO_0000074082" description="UDP-N-acetyl-D-mannosamine dehydrogenase">
    <location>
        <begin position="1"/>
        <end position="420"/>
    </location>
</feature>
<feature type="active site" description="Proton donor/acceptor" evidence="1">
    <location>
        <position position="212"/>
    </location>
</feature>
<feature type="active site" description="Nucleophile" evidence="1">
    <location>
        <position position="266"/>
    </location>
</feature>
<feature type="binding site" description="in chain A" evidence="1">
    <location>
        <position position="13"/>
    </location>
    <ligand>
        <name>NAD(+)</name>
        <dbReference type="ChEBI" id="CHEBI:57540"/>
        <note>ligand shared between homodimeric partners</note>
    </ligand>
</feature>
<feature type="binding site" description="in chain A" evidence="1">
    <location>
        <position position="14"/>
    </location>
    <ligand>
        <name>NAD(+)</name>
        <dbReference type="ChEBI" id="CHEBI:57540"/>
        <note>ligand shared between homodimeric partners</note>
    </ligand>
</feature>
<feature type="binding site" description="in chain A" evidence="1">
    <location>
        <position position="33"/>
    </location>
    <ligand>
        <name>NAD(+)</name>
        <dbReference type="ChEBI" id="CHEBI:57540"/>
        <note>ligand shared between homodimeric partners</note>
    </ligand>
</feature>
<feature type="binding site" description="in chain A" evidence="1">
    <location>
        <position position="85"/>
    </location>
    <ligand>
        <name>NAD(+)</name>
        <dbReference type="ChEBI" id="CHEBI:57540"/>
        <note>ligand shared between homodimeric partners</note>
    </ligand>
</feature>
<feature type="binding site" description="in chain A" evidence="1">
    <location>
        <position position="126"/>
    </location>
    <ligand>
        <name>NAD(+)</name>
        <dbReference type="ChEBI" id="CHEBI:57540"/>
        <note>ligand shared between homodimeric partners</note>
    </ligand>
</feature>
<feature type="binding site" description="in chain A" evidence="1">
    <location>
        <position position="160"/>
    </location>
    <ligand>
        <name>UDP-N-acetyl-alpha-D-mannosaminouronate</name>
        <dbReference type="ChEBI" id="CHEBI:70731"/>
        <note>ligand shared between homodimeric partners</note>
    </ligand>
</feature>
<feature type="binding site" description="in chain A" evidence="1">
    <location>
        <position position="161"/>
    </location>
    <ligand>
        <name>UDP-N-acetyl-alpha-D-mannosaminouronate</name>
        <dbReference type="ChEBI" id="CHEBI:70731"/>
        <note>ligand shared between homodimeric partners</note>
    </ligand>
</feature>
<feature type="binding site" description="in chain A" evidence="1">
    <location>
        <position position="212"/>
    </location>
    <ligand>
        <name>UDP-N-acetyl-alpha-D-mannosaminouronate</name>
        <dbReference type="ChEBI" id="CHEBI:70731"/>
        <note>ligand shared between homodimeric partners</note>
    </ligand>
</feature>
<feature type="binding site" description="in chain A" evidence="1">
    <location>
        <position position="216"/>
    </location>
    <ligand>
        <name>UDP-N-acetyl-alpha-D-mannosaminouronate</name>
        <dbReference type="ChEBI" id="CHEBI:70731"/>
        <note>ligand shared between homodimeric partners</note>
    </ligand>
</feature>
<feature type="binding site" description="in chain A" evidence="1">
    <location>
        <position position="219"/>
    </location>
    <ligand>
        <name>UDP-N-acetyl-alpha-D-mannosaminouronate</name>
        <dbReference type="ChEBI" id="CHEBI:70731"/>
        <note>ligand shared between homodimeric partners</note>
    </ligand>
</feature>
<feature type="binding site" description="in chain B" evidence="1">
    <location>
        <position position="250"/>
    </location>
    <ligand>
        <name>UDP-N-acetyl-alpha-D-mannosaminouronate</name>
        <dbReference type="ChEBI" id="CHEBI:70731"/>
        <note>ligand shared between homodimeric partners</note>
    </ligand>
</feature>
<feature type="binding site" description="in chain B" evidence="1">
    <location>
        <position position="252"/>
    </location>
    <ligand>
        <name>UDP-N-acetyl-alpha-D-mannosaminouronate</name>
        <dbReference type="ChEBI" id="CHEBI:70731"/>
        <note>ligand shared between homodimeric partners</note>
    </ligand>
</feature>
<feature type="binding site" description="in chain A" evidence="1">
    <location>
        <position position="263"/>
    </location>
    <ligand>
        <name>UDP-N-acetyl-alpha-D-mannosaminouronate</name>
        <dbReference type="ChEBI" id="CHEBI:70731"/>
        <note>ligand shared between homodimeric partners</note>
    </ligand>
</feature>
<feature type="binding site" description="in chain A" evidence="1">
    <location>
        <position position="330"/>
    </location>
    <ligand>
        <name>UDP-N-acetyl-alpha-D-mannosaminouronate</name>
        <dbReference type="ChEBI" id="CHEBI:70731"/>
        <note>ligand shared between homodimeric partners</note>
    </ligand>
</feature>
<feature type="binding site" description="in chain A" evidence="1">
    <location>
        <position position="331"/>
    </location>
    <ligand>
        <name>UDP-N-acetyl-alpha-D-mannosaminouronate</name>
        <dbReference type="ChEBI" id="CHEBI:70731"/>
        <note>ligand shared between homodimeric partners</note>
    </ligand>
</feature>
<feature type="binding site" description="in chain B" evidence="1">
    <location>
        <position position="338"/>
    </location>
    <ligand>
        <name>NAD(+)</name>
        <dbReference type="ChEBI" id="CHEBI:57540"/>
        <note>ligand shared between homodimeric partners</note>
    </ligand>
</feature>
<feature type="binding site" description="in chain A" evidence="1">
    <location>
        <position position="416"/>
    </location>
    <ligand>
        <name>UDP-N-acetyl-alpha-D-mannosaminouronate</name>
        <dbReference type="ChEBI" id="CHEBI:70731"/>
        <note>ligand shared between homodimeric partners</note>
    </ligand>
</feature>
<name>WECC_YERPE</name>
<comment type="function">
    <text evidence="1">Catalyzes the four-electron oxidation of UDP-N-acetyl-D-mannosamine (UDP-ManNAc), reducing NAD(+) and releasing UDP-N-acetylmannosaminuronic acid (UDP-ManNAcA).</text>
</comment>
<comment type="catalytic activity">
    <reaction evidence="1">
        <text>UDP-N-acetyl-alpha-D-mannosamine + 2 NAD(+) + H2O = UDP-N-acetyl-alpha-D-mannosaminouronate + 2 NADH + 3 H(+)</text>
        <dbReference type="Rhea" id="RHEA:25780"/>
        <dbReference type="ChEBI" id="CHEBI:15377"/>
        <dbReference type="ChEBI" id="CHEBI:15378"/>
        <dbReference type="ChEBI" id="CHEBI:57540"/>
        <dbReference type="ChEBI" id="CHEBI:57945"/>
        <dbReference type="ChEBI" id="CHEBI:68623"/>
        <dbReference type="ChEBI" id="CHEBI:70731"/>
        <dbReference type="EC" id="1.1.1.336"/>
    </reaction>
</comment>
<comment type="pathway">
    <text evidence="1">Bacterial outer membrane biogenesis; enterobacterial common antigen biosynthesis.</text>
</comment>
<comment type="subunit">
    <text evidence="1">Homodimer.</text>
</comment>
<comment type="similarity">
    <text evidence="1">Belongs to the UDP-glucose/GDP-mannose dehydrogenase family. WecC subfamily.</text>
</comment>
<proteinExistence type="inferred from homology"/>
<gene>
    <name evidence="1" type="primary">wecC</name>
    <name type="synonym">rffD</name>
    <name type="ordered locus">YPO3863</name>
    <name type="ordered locus">y0365</name>
    <name type="ordered locus">YP_3182</name>
</gene>
<sequence length="420" mass="45639">MSFETISVIGLGYIGLPTAAAFASRKKKVIGVDVNAHAVETINRGAIHIVEPDLDKVVKIAVEGGYLQAVTKPQAADAFLIAVPTPFKGDHEPDMIFVESAAKSIAPVLKKGDLVILESTSPVGATEQMAQWLAEARPDLSFPQQAGEAADINIAYCPERVLPGQVMVELIQNDRVIGGMTPKCSARASALYKIFLEGECVVTNSRTAEMCKLTENSFRDVNIAFANELSLICDEQGINVWELIRLANRHPRVNILQPGPGVGGHCIAVDPWFIVSQNPQLARLIHTARLVNDGKPLWVVDRVKAAVADCLAASDKRASEVKIACFGLAFKPDIDDLRESPAVGVARLIAEWHVGETLVVEPNVEQLPKSLMGLVTLKDTATALQQADVLVMLVDHKQFKAIKPEDIKQQWIVDTKGVWR</sequence>
<dbReference type="EC" id="1.1.1.336" evidence="1"/>
<dbReference type="EMBL" id="AL590842">
    <property type="protein sequence ID" value="CAL22450.1"/>
    <property type="molecule type" value="Genomic_DNA"/>
</dbReference>
<dbReference type="EMBL" id="AE009952">
    <property type="protein sequence ID" value="AAM83954.1"/>
    <property type="molecule type" value="Genomic_DNA"/>
</dbReference>
<dbReference type="EMBL" id="AE017042">
    <property type="protein sequence ID" value="AAS63350.1"/>
    <property type="molecule type" value="Genomic_DNA"/>
</dbReference>
<dbReference type="PIR" id="AG0470">
    <property type="entry name" value="AG0470"/>
</dbReference>
<dbReference type="RefSeq" id="WP_002211985.1">
    <property type="nucleotide sequence ID" value="NZ_WUCM01000073.1"/>
</dbReference>
<dbReference type="RefSeq" id="YP_002348741.1">
    <property type="nucleotide sequence ID" value="NC_003143.1"/>
</dbReference>
<dbReference type="SMR" id="Q8ZAE4"/>
<dbReference type="STRING" id="214092.YPO3863"/>
<dbReference type="PaxDb" id="214092-YPO3863"/>
<dbReference type="DNASU" id="1145312"/>
<dbReference type="EnsemblBacteria" id="AAS63350">
    <property type="protein sequence ID" value="AAS63350"/>
    <property type="gene ID" value="YP_3182"/>
</dbReference>
<dbReference type="GeneID" id="57974840"/>
<dbReference type="KEGG" id="ype:YPO3863"/>
<dbReference type="KEGG" id="ypk:y0365"/>
<dbReference type="KEGG" id="ypm:YP_3182"/>
<dbReference type="PATRIC" id="fig|214092.21.peg.4389"/>
<dbReference type="eggNOG" id="COG0677">
    <property type="taxonomic scope" value="Bacteria"/>
</dbReference>
<dbReference type="HOGENOM" id="CLU_023810_3_2_6"/>
<dbReference type="OMA" id="IDPWFIV"/>
<dbReference type="OrthoDB" id="9803238at2"/>
<dbReference type="BRENDA" id="1.1.1.336">
    <property type="organism ID" value="4559"/>
</dbReference>
<dbReference type="UniPathway" id="UPA00566"/>
<dbReference type="Proteomes" id="UP000000815">
    <property type="component" value="Chromosome"/>
</dbReference>
<dbReference type="Proteomes" id="UP000001019">
    <property type="component" value="Chromosome"/>
</dbReference>
<dbReference type="Proteomes" id="UP000002490">
    <property type="component" value="Chromosome"/>
</dbReference>
<dbReference type="GO" id="GO:0051287">
    <property type="term" value="F:NAD binding"/>
    <property type="evidence" value="ECO:0007669"/>
    <property type="project" value="InterPro"/>
</dbReference>
<dbReference type="GO" id="GO:0016628">
    <property type="term" value="F:oxidoreductase activity, acting on the CH-CH group of donors, NAD or NADP as acceptor"/>
    <property type="evidence" value="ECO:0007669"/>
    <property type="project" value="InterPro"/>
</dbReference>
<dbReference type="GO" id="GO:0089714">
    <property type="term" value="F:UDP-N-acetyl-D-mannosamine dehydrogenase activity"/>
    <property type="evidence" value="ECO:0007669"/>
    <property type="project" value="UniProtKB-UniRule"/>
</dbReference>
<dbReference type="GO" id="GO:0009246">
    <property type="term" value="P:enterobacterial common antigen biosynthetic process"/>
    <property type="evidence" value="ECO:0007669"/>
    <property type="project" value="UniProtKB-UniRule"/>
</dbReference>
<dbReference type="FunFam" id="3.40.50.720:FF:000139">
    <property type="entry name" value="UDP-N-acetyl-D-mannosamine dehydrogenase"/>
    <property type="match status" value="1"/>
</dbReference>
<dbReference type="FunFam" id="3.40.50.720:FF:000235">
    <property type="entry name" value="UDP-N-acetyl-D-mannosamine dehydrogenase"/>
    <property type="match status" value="1"/>
</dbReference>
<dbReference type="Gene3D" id="1.20.5.100">
    <property type="entry name" value="Cytochrome c1, transmembrane anchor, C-terminal"/>
    <property type="match status" value="1"/>
</dbReference>
<dbReference type="Gene3D" id="3.40.50.720">
    <property type="entry name" value="NAD(P)-binding Rossmann-like Domain"/>
    <property type="match status" value="2"/>
</dbReference>
<dbReference type="HAMAP" id="MF_02029">
    <property type="entry name" value="WecC_RffD"/>
    <property type="match status" value="1"/>
</dbReference>
<dbReference type="InterPro" id="IPR008927">
    <property type="entry name" value="6-PGluconate_DH-like_C_sf"/>
</dbReference>
<dbReference type="InterPro" id="IPR036291">
    <property type="entry name" value="NAD(P)-bd_dom_sf"/>
</dbReference>
<dbReference type="InterPro" id="IPR017476">
    <property type="entry name" value="UDP-Glc/GDP-Man"/>
</dbReference>
<dbReference type="InterPro" id="IPR014027">
    <property type="entry name" value="UDP-Glc/GDP-Man_DH_C"/>
</dbReference>
<dbReference type="InterPro" id="IPR036220">
    <property type="entry name" value="UDP-Glc/GDP-Man_DH_C_sf"/>
</dbReference>
<dbReference type="InterPro" id="IPR014026">
    <property type="entry name" value="UDP-Glc/GDP-Man_DH_dimer"/>
</dbReference>
<dbReference type="InterPro" id="IPR001732">
    <property type="entry name" value="UDP-Glc/GDP-Man_DH_N"/>
</dbReference>
<dbReference type="InterPro" id="IPR028359">
    <property type="entry name" value="UDP_ManNAc/GlcNAc_DH"/>
</dbReference>
<dbReference type="InterPro" id="IPR032891">
    <property type="entry name" value="WecC"/>
</dbReference>
<dbReference type="NCBIfam" id="TIGR03026">
    <property type="entry name" value="NDP-sugDHase"/>
    <property type="match status" value="1"/>
</dbReference>
<dbReference type="NCBIfam" id="NF008286">
    <property type="entry name" value="PRK11064.1"/>
    <property type="match status" value="1"/>
</dbReference>
<dbReference type="PANTHER" id="PTHR43491">
    <property type="entry name" value="UDP-N-ACETYL-D-MANNOSAMINE DEHYDROGENASE"/>
    <property type="match status" value="1"/>
</dbReference>
<dbReference type="PANTHER" id="PTHR43491:SF1">
    <property type="entry name" value="UDP-N-ACETYL-D-MANNOSAMINE DEHYDROGENASE"/>
    <property type="match status" value="1"/>
</dbReference>
<dbReference type="Pfam" id="PF00984">
    <property type="entry name" value="UDPG_MGDP_dh"/>
    <property type="match status" value="1"/>
</dbReference>
<dbReference type="Pfam" id="PF03720">
    <property type="entry name" value="UDPG_MGDP_dh_C"/>
    <property type="match status" value="1"/>
</dbReference>
<dbReference type="Pfam" id="PF03721">
    <property type="entry name" value="UDPG_MGDP_dh_N"/>
    <property type="match status" value="1"/>
</dbReference>
<dbReference type="PIRSF" id="PIRSF500136">
    <property type="entry name" value="UDP_ManNAc_DH"/>
    <property type="match status" value="1"/>
</dbReference>
<dbReference type="PIRSF" id="PIRSF000124">
    <property type="entry name" value="UDPglc_GDPman_dh"/>
    <property type="match status" value="1"/>
</dbReference>
<dbReference type="SMART" id="SM00984">
    <property type="entry name" value="UDPG_MGDP_dh_C"/>
    <property type="match status" value="1"/>
</dbReference>
<dbReference type="SUPFAM" id="SSF48179">
    <property type="entry name" value="6-phosphogluconate dehydrogenase C-terminal domain-like"/>
    <property type="match status" value="1"/>
</dbReference>
<dbReference type="SUPFAM" id="SSF51735">
    <property type="entry name" value="NAD(P)-binding Rossmann-fold domains"/>
    <property type="match status" value="1"/>
</dbReference>
<dbReference type="SUPFAM" id="SSF52413">
    <property type="entry name" value="UDP-glucose/GDP-mannose dehydrogenase C-terminal domain"/>
    <property type="match status" value="1"/>
</dbReference>
<accession>Q8ZAE4</accession>
<accession>Q0WAE7</accession>
<organism>
    <name type="scientific">Yersinia pestis</name>
    <dbReference type="NCBI Taxonomy" id="632"/>
    <lineage>
        <taxon>Bacteria</taxon>
        <taxon>Pseudomonadati</taxon>
        <taxon>Pseudomonadota</taxon>
        <taxon>Gammaproteobacteria</taxon>
        <taxon>Enterobacterales</taxon>
        <taxon>Yersiniaceae</taxon>
        <taxon>Yersinia</taxon>
    </lineage>
</organism>
<reference key="1">
    <citation type="journal article" date="2001" name="Nature">
        <title>Genome sequence of Yersinia pestis, the causative agent of plague.</title>
        <authorList>
            <person name="Parkhill J."/>
            <person name="Wren B.W."/>
            <person name="Thomson N.R."/>
            <person name="Titball R.W."/>
            <person name="Holden M.T.G."/>
            <person name="Prentice M.B."/>
            <person name="Sebaihia M."/>
            <person name="James K.D."/>
            <person name="Churcher C.M."/>
            <person name="Mungall K.L."/>
            <person name="Baker S."/>
            <person name="Basham D."/>
            <person name="Bentley S.D."/>
            <person name="Brooks K."/>
            <person name="Cerdeno-Tarraga A.-M."/>
            <person name="Chillingworth T."/>
            <person name="Cronin A."/>
            <person name="Davies R.M."/>
            <person name="Davis P."/>
            <person name="Dougan G."/>
            <person name="Feltwell T."/>
            <person name="Hamlin N."/>
            <person name="Holroyd S."/>
            <person name="Jagels K."/>
            <person name="Karlyshev A.V."/>
            <person name="Leather S."/>
            <person name="Moule S."/>
            <person name="Oyston P.C.F."/>
            <person name="Quail M.A."/>
            <person name="Rutherford K.M."/>
            <person name="Simmonds M."/>
            <person name="Skelton J."/>
            <person name="Stevens K."/>
            <person name="Whitehead S."/>
            <person name="Barrell B.G."/>
        </authorList>
    </citation>
    <scope>NUCLEOTIDE SEQUENCE [LARGE SCALE GENOMIC DNA]</scope>
    <source>
        <strain>CO-92 / Biovar Orientalis</strain>
    </source>
</reference>
<reference key="2">
    <citation type="journal article" date="2002" name="J. Bacteriol.">
        <title>Genome sequence of Yersinia pestis KIM.</title>
        <authorList>
            <person name="Deng W."/>
            <person name="Burland V."/>
            <person name="Plunkett G. III"/>
            <person name="Boutin A."/>
            <person name="Mayhew G.F."/>
            <person name="Liss P."/>
            <person name="Perna N.T."/>
            <person name="Rose D.J."/>
            <person name="Mau B."/>
            <person name="Zhou S."/>
            <person name="Schwartz D.C."/>
            <person name="Fetherston J.D."/>
            <person name="Lindler L.E."/>
            <person name="Brubaker R.R."/>
            <person name="Plano G.V."/>
            <person name="Straley S.C."/>
            <person name="McDonough K.A."/>
            <person name="Nilles M.L."/>
            <person name="Matson J.S."/>
            <person name="Blattner F.R."/>
            <person name="Perry R.D."/>
        </authorList>
    </citation>
    <scope>NUCLEOTIDE SEQUENCE [LARGE SCALE GENOMIC DNA]</scope>
    <source>
        <strain>KIM10+ / Biovar Mediaevalis</strain>
    </source>
</reference>
<reference key="3">
    <citation type="journal article" date="2004" name="DNA Res.">
        <title>Complete genome sequence of Yersinia pestis strain 91001, an isolate avirulent to humans.</title>
        <authorList>
            <person name="Song Y."/>
            <person name="Tong Z."/>
            <person name="Wang J."/>
            <person name="Wang L."/>
            <person name="Guo Z."/>
            <person name="Han Y."/>
            <person name="Zhang J."/>
            <person name="Pei D."/>
            <person name="Zhou D."/>
            <person name="Qin H."/>
            <person name="Pang X."/>
            <person name="Han Y."/>
            <person name="Zhai J."/>
            <person name="Li M."/>
            <person name="Cui B."/>
            <person name="Qi Z."/>
            <person name="Jin L."/>
            <person name="Dai R."/>
            <person name="Chen F."/>
            <person name="Li S."/>
            <person name="Ye C."/>
            <person name="Du Z."/>
            <person name="Lin W."/>
            <person name="Wang J."/>
            <person name="Yu J."/>
            <person name="Yang H."/>
            <person name="Wang J."/>
            <person name="Huang P."/>
            <person name="Yang R."/>
        </authorList>
    </citation>
    <scope>NUCLEOTIDE SEQUENCE [LARGE SCALE GENOMIC DNA]</scope>
    <source>
        <strain>91001 / Biovar Mediaevalis</strain>
    </source>
</reference>
<evidence type="ECO:0000255" key="1">
    <source>
        <dbReference type="HAMAP-Rule" id="MF_02029"/>
    </source>
</evidence>